<proteinExistence type="inferred from homology"/>
<comment type="function">
    <text evidence="1">One of the primary rRNA binding proteins, it binds directly to 16S rRNA where it helps nucleate assembly of the platform of the 30S subunit by binding and bridging several RNA helices of the 16S rRNA.</text>
</comment>
<comment type="function">
    <text evidence="1">Forms an intersubunit bridge (bridge B4) with the 23S rRNA of the 50S subunit in the ribosome.</text>
</comment>
<comment type="subunit">
    <text evidence="1">Part of the 30S ribosomal subunit. Forms a bridge to the 50S subunit in the 70S ribosome, contacting the 23S rRNA.</text>
</comment>
<comment type="similarity">
    <text evidence="1">Belongs to the universal ribosomal protein uS15 family.</text>
</comment>
<reference key="1">
    <citation type="journal article" date="2010" name="J. Bacteriol.">
        <title>Complete genome sequence of the aerobic facultative methanotroph Methylocella silvestris BL2.</title>
        <authorList>
            <person name="Chen Y."/>
            <person name="Crombie A."/>
            <person name="Rahman M.T."/>
            <person name="Dedysh S.N."/>
            <person name="Liesack W."/>
            <person name="Stott M.B."/>
            <person name="Alam M."/>
            <person name="Theisen A.R."/>
            <person name="Murrell J.C."/>
            <person name="Dunfield P.F."/>
        </authorList>
    </citation>
    <scope>NUCLEOTIDE SEQUENCE [LARGE SCALE GENOMIC DNA]</scope>
    <source>
        <strain>DSM 15510 / CIP 108128 / LMG 27833 / NCIMB 13906 / BL2</strain>
    </source>
</reference>
<evidence type="ECO:0000255" key="1">
    <source>
        <dbReference type="HAMAP-Rule" id="MF_01343"/>
    </source>
</evidence>
<evidence type="ECO:0000305" key="2"/>
<dbReference type="EMBL" id="CP001280">
    <property type="protein sequence ID" value="ACK49248.1"/>
    <property type="molecule type" value="Genomic_DNA"/>
</dbReference>
<dbReference type="RefSeq" id="WP_012589318.1">
    <property type="nucleotide sequence ID" value="NC_011666.1"/>
</dbReference>
<dbReference type="SMR" id="B8EP10"/>
<dbReference type="STRING" id="395965.Msil_0269"/>
<dbReference type="KEGG" id="msl:Msil_0269"/>
<dbReference type="eggNOG" id="COG0184">
    <property type="taxonomic scope" value="Bacteria"/>
</dbReference>
<dbReference type="HOGENOM" id="CLU_148518_0_0_5"/>
<dbReference type="OrthoDB" id="9799262at2"/>
<dbReference type="Proteomes" id="UP000002257">
    <property type="component" value="Chromosome"/>
</dbReference>
<dbReference type="GO" id="GO:0022627">
    <property type="term" value="C:cytosolic small ribosomal subunit"/>
    <property type="evidence" value="ECO:0007669"/>
    <property type="project" value="TreeGrafter"/>
</dbReference>
<dbReference type="GO" id="GO:0019843">
    <property type="term" value="F:rRNA binding"/>
    <property type="evidence" value="ECO:0007669"/>
    <property type="project" value="UniProtKB-UniRule"/>
</dbReference>
<dbReference type="GO" id="GO:0003735">
    <property type="term" value="F:structural constituent of ribosome"/>
    <property type="evidence" value="ECO:0007669"/>
    <property type="project" value="InterPro"/>
</dbReference>
<dbReference type="GO" id="GO:0006412">
    <property type="term" value="P:translation"/>
    <property type="evidence" value="ECO:0007669"/>
    <property type="project" value="UniProtKB-UniRule"/>
</dbReference>
<dbReference type="CDD" id="cd00353">
    <property type="entry name" value="Ribosomal_S15p_S13e"/>
    <property type="match status" value="1"/>
</dbReference>
<dbReference type="FunFam" id="1.10.287.10:FF:000002">
    <property type="entry name" value="30S ribosomal protein S15"/>
    <property type="match status" value="1"/>
</dbReference>
<dbReference type="Gene3D" id="6.10.250.3130">
    <property type="match status" value="1"/>
</dbReference>
<dbReference type="Gene3D" id="1.10.287.10">
    <property type="entry name" value="S15/NS1, RNA-binding"/>
    <property type="match status" value="1"/>
</dbReference>
<dbReference type="HAMAP" id="MF_01343_B">
    <property type="entry name" value="Ribosomal_uS15_B"/>
    <property type="match status" value="1"/>
</dbReference>
<dbReference type="InterPro" id="IPR000589">
    <property type="entry name" value="Ribosomal_uS15"/>
</dbReference>
<dbReference type="InterPro" id="IPR005290">
    <property type="entry name" value="Ribosomal_uS15_bac-type"/>
</dbReference>
<dbReference type="InterPro" id="IPR009068">
    <property type="entry name" value="uS15_NS1_RNA-bd_sf"/>
</dbReference>
<dbReference type="NCBIfam" id="TIGR00952">
    <property type="entry name" value="S15_bact"/>
    <property type="match status" value="1"/>
</dbReference>
<dbReference type="PANTHER" id="PTHR23321">
    <property type="entry name" value="RIBOSOMAL PROTEIN S15, BACTERIAL AND ORGANELLAR"/>
    <property type="match status" value="1"/>
</dbReference>
<dbReference type="PANTHER" id="PTHR23321:SF26">
    <property type="entry name" value="SMALL RIBOSOMAL SUBUNIT PROTEIN US15M"/>
    <property type="match status" value="1"/>
</dbReference>
<dbReference type="Pfam" id="PF00312">
    <property type="entry name" value="Ribosomal_S15"/>
    <property type="match status" value="1"/>
</dbReference>
<dbReference type="SMART" id="SM01387">
    <property type="entry name" value="Ribosomal_S15"/>
    <property type="match status" value="1"/>
</dbReference>
<dbReference type="SUPFAM" id="SSF47060">
    <property type="entry name" value="S15/NS1 RNA-binding domain"/>
    <property type="match status" value="1"/>
</dbReference>
<dbReference type="PROSITE" id="PS00362">
    <property type="entry name" value="RIBOSOMAL_S15"/>
    <property type="match status" value="1"/>
</dbReference>
<keyword id="KW-1185">Reference proteome</keyword>
<keyword id="KW-0687">Ribonucleoprotein</keyword>
<keyword id="KW-0689">Ribosomal protein</keyword>
<keyword id="KW-0694">RNA-binding</keyword>
<keyword id="KW-0699">rRNA-binding</keyword>
<gene>
    <name evidence="1" type="primary">rpsO</name>
    <name type="ordered locus">Msil_0269</name>
</gene>
<sequence>MSITPERKQTLVKEYAQKSGDTGSPEVQVAILTERIVNLTEHFKTHVKDNHSRRGLLKMVSQRRQLLDYVKNRDEPRYKSLIERLGIRR</sequence>
<protein>
    <recommendedName>
        <fullName evidence="1">Small ribosomal subunit protein uS15</fullName>
    </recommendedName>
    <alternativeName>
        <fullName evidence="2">30S ribosomal protein S15</fullName>
    </alternativeName>
</protein>
<feature type="chain" id="PRO_1000166428" description="Small ribosomal subunit protein uS15">
    <location>
        <begin position="1"/>
        <end position="89"/>
    </location>
</feature>
<accession>B8EP10</accession>
<organism>
    <name type="scientific">Methylocella silvestris (strain DSM 15510 / CIP 108128 / LMG 27833 / NCIMB 13906 / BL2)</name>
    <dbReference type="NCBI Taxonomy" id="395965"/>
    <lineage>
        <taxon>Bacteria</taxon>
        <taxon>Pseudomonadati</taxon>
        <taxon>Pseudomonadota</taxon>
        <taxon>Alphaproteobacteria</taxon>
        <taxon>Hyphomicrobiales</taxon>
        <taxon>Beijerinckiaceae</taxon>
        <taxon>Methylocella</taxon>
    </lineage>
</organism>
<name>RS15_METSB</name>